<dbReference type="EC" id="2.4.1.227" evidence="1"/>
<dbReference type="EMBL" id="AE000657">
    <property type="protein sequence ID" value="AAC07193.1"/>
    <property type="molecule type" value="Genomic_DNA"/>
</dbReference>
<dbReference type="PIR" id="C70401">
    <property type="entry name" value="C70401"/>
</dbReference>
<dbReference type="RefSeq" id="NP_213802.1">
    <property type="nucleotide sequence ID" value="NC_000918.1"/>
</dbReference>
<dbReference type="RefSeq" id="WP_010880740.1">
    <property type="nucleotide sequence ID" value="NC_000918.1"/>
</dbReference>
<dbReference type="SMR" id="O67238"/>
<dbReference type="FunCoup" id="O67238">
    <property type="interactions" value="257"/>
</dbReference>
<dbReference type="STRING" id="224324.aq_1177"/>
<dbReference type="CAZy" id="GT28">
    <property type="family name" value="Glycosyltransferase Family 28"/>
</dbReference>
<dbReference type="EnsemblBacteria" id="AAC07193">
    <property type="protein sequence ID" value="AAC07193"/>
    <property type="gene ID" value="aq_1177"/>
</dbReference>
<dbReference type="KEGG" id="aae:aq_1177"/>
<dbReference type="PATRIC" id="fig|224324.8.peg.915"/>
<dbReference type="eggNOG" id="COG0707">
    <property type="taxonomic scope" value="Bacteria"/>
</dbReference>
<dbReference type="HOGENOM" id="CLU_037404_2_1_0"/>
<dbReference type="InParanoid" id="O67238"/>
<dbReference type="OrthoDB" id="9808936at2"/>
<dbReference type="UniPathway" id="UPA00219"/>
<dbReference type="Proteomes" id="UP000000798">
    <property type="component" value="Chromosome"/>
</dbReference>
<dbReference type="GO" id="GO:0005886">
    <property type="term" value="C:plasma membrane"/>
    <property type="evidence" value="ECO:0007669"/>
    <property type="project" value="UniProtKB-SubCell"/>
</dbReference>
<dbReference type="GO" id="GO:0016757">
    <property type="term" value="F:glycosyltransferase activity"/>
    <property type="evidence" value="ECO:0000318"/>
    <property type="project" value="GO_Central"/>
</dbReference>
<dbReference type="GO" id="GO:0051991">
    <property type="term" value="F:UDP-N-acetyl-D-glucosamine:N-acetylmuramoyl-L-alanyl-D-glutamyl-meso-2,6-diaminopimelyl-D-alanyl-D-alanine-diphosphoundecaprenol 4-beta-N-acetylglucosaminlytransferase activity"/>
    <property type="evidence" value="ECO:0007669"/>
    <property type="project" value="RHEA"/>
</dbReference>
<dbReference type="GO" id="GO:0050511">
    <property type="term" value="F:undecaprenyldiphospho-muramoylpentapeptide beta-N-acetylglucosaminyltransferase activity"/>
    <property type="evidence" value="ECO:0007669"/>
    <property type="project" value="UniProtKB-UniRule"/>
</dbReference>
<dbReference type="GO" id="GO:0005975">
    <property type="term" value="P:carbohydrate metabolic process"/>
    <property type="evidence" value="ECO:0007669"/>
    <property type="project" value="InterPro"/>
</dbReference>
<dbReference type="GO" id="GO:0051301">
    <property type="term" value="P:cell division"/>
    <property type="evidence" value="ECO:0007669"/>
    <property type="project" value="UniProtKB-KW"/>
</dbReference>
<dbReference type="GO" id="GO:0071555">
    <property type="term" value="P:cell wall organization"/>
    <property type="evidence" value="ECO:0007669"/>
    <property type="project" value="UniProtKB-KW"/>
</dbReference>
<dbReference type="GO" id="GO:0030259">
    <property type="term" value="P:lipid glycosylation"/>
    <property type="evidence" value="ECO:0007669"/>
    <property type="project" value="UniProtKB-UniRule"/>
</dbReference>
<dbReference type="GO" id="GO:0009252">
    <property type="term" value="P:peptidoglycan biosynthetic process"/>
    <property type="evidence" value="ECO:0007669"/>
    <property type="project" value="UniProtKB-UniRule"/>
</dbReference>
<dbReference type="GO" id="GO:0008360">
    <property type="term" value="P:regulation of cell shape"/>
    <property type="evidence" value="ECO:0007669"/>
    <property type="project" value="UniProtKB-KW"/>
</dbReference>
<dbReference type="CDD" id="cd03785">
    <property type="entry name" value="GT28_MurG"/>
    <property type="match status" value="1"/>
</dbReference>
<dbReference type="Gene3D" id="3.40.50.2000">
    <property type="entry name" value="Glycogen Phosphorylase B"/>
    <property type="match status" value="2"/>
</dbReference>
<dbReference type="HAMAP" id="MF_00033">
    <property type="entry name" value="MurG"/>
    <property type="match status" value="1"/>
</dbReference>
<dbReference type="InterPro" id="IPR006009">
    <property type="entry name" value="GlcNAc_MurG"/>
</dbReference>
<dbReference type="InterPro" id="IPR007235">
    <property type="entry name" value="Glyco_trans_28_C"/>
</dbReference>
<dbReference type="InterPro" id="IPR004276">
    <property type="entry name" value="GlycoTrans_28_N"/>
</dbReference>
<dbReference type="NCBIfam" id="TIGR01133">
    <property type="entry name" value="murG"/>
    <property type="match status" value="1"/>
</dbReference>
<dbReference type="PANTHER" id="PTHR21015:SF22">
    <property type="entry name" value="GLYCOSYLTRANSFERASE"/>
    <property type="match status" value="1"/>
</dbReference>
<dbReference type="PANTHER" id="PTHR21015">
    <property type="entry name" value="UDP-N-ACETYLGLUCOSAMINE--N-ACETYLMURAMYL-(PENTAPEPTIDE) PYROPHOSPHORYL-UNDECAPRENOL N-ACETYLGLUCOSAMINE TRANSFERASE 1"/>
    <property type="match status" value="1"/>
</dbReference>
<dbReference type="Pfam" id="PF04101">
    <property type="entry name" value="Glyco_tran_28_C"/>
    <property type="match status" value="1"/>
</dbReference>
<dbReference type="Pfam" id="PF03033">
    <property type="entry name" value="Glyco_transf_28"/>
    <property type="match status" value="1"/>
</dbReference>
<dbReference type="SUPFAM" id="SSF53756">
    <property type="entry name" value="UDP-Glycosyltransferase/glycogen phosphorylase"/>
    <property type="match status" value="1"/>
</dbReference>
<comment type="function">
    <text evidence="1">Cell wall formation. Catalyzes the transfer of a GlcNAc subunit on undecaprenyl-pyrophosphoryl-MurNAc-pentapeptide (lipid intermediate I) to form undecaprenyl-pyrophosphoryl-MurNAc-(pentapeptide)GlcNAc (lipid intermediate II).</text>
</comment>
<comment type="catalytic activity">
    <reaction evidence="1">
        <text>di-trans,octa-cis-undecaprenyl diphospho-N-acetyl-alpha-D-muramoyl-L-alanyl-D-glutamyl-meso-2,6-diaminopimeloyl-D-alanyl-D-alanine + UDP-N-acetyl-alpha-D-glucosamine = di-trans,octa-cis-undecaprenyl diphospho-[N-acetyl-alpha-D-glucosaminyl-(1-&gt;4)]-N-acetyl-alpha-D-muramoyl-L-alanyl-D-glutamyl-meso-2,6-diaminopimeloyl-D-alanyl-D-alanine + UDP + H(+)</text>
        <dbReference type="Rhea" id="RHEA:31227"/>
        <dbReference type="ChEBI" id="CHEBI:15378"/>
        <dbReference type="ChEBI" id="CHEBI:57705"/>
        <dbReference type="ChEBI" id="CHEBI:58223"/>
        <dbReference type="ChEBI" id="CHEBI:61387"/>
        <dbReference type="ChEBI" id="CHEBI:61388"/>
        <dbReference type="EC" id="2.4.1.227"/>
    </reaction>
</comment>
<comment type="pathway">
    <text evidence="1">Cell wall biogenesis; peptidoglycan biosynthesis.</text>
</comment>
<comment type="subcellular location">
    <subcellularLocation>
        <location evidence="1">Cell inner membrane</location>
        <topology evidence="1">Peripheral membrane protein</topology>
        <orientation evidence="1">Cytoplasmic side</orientation>
    </subcellularLocation>
</comment>
<comment type="similarity">
    <text evidence="1">Belongs to the glycosyltransferase 28 family. MurG subfamily.</text>
</comment>
<proteinExistence type="inferred from homology"/>
<feature type="chain" id="PRO_0000109137" description="UDP-N-acetylglucosamine--N-acetylmuramyl-(pentapeptide) pyrophosphoryl-undecaprenol N-acetylglucosamine transferase">
    <location>
        <begin position="1"/>
        <end position="344"/>
    </location>
</feature>
<feature type="binding site" evidence="1">
    <location>
        <begin position="9"/>
        <end position="11"/>
    </location>
    <ligand>
        <name>UDP-N-acetyl-alpha-D-glucosamine</name>
        <dbReference type="ChEBI" id="CHEBI:57705"/>
    </ligand>
</feature>
<feature type="binding site" evidence="1">
    <location>
        <position position="118"/>
    </location>
    <ligand>
        <name>UDP-N-acetyl-alpha-D-glucosamine</name>
        <dbReference type="ChEBI" id="CHEBI:57705"/>
    </ligand>
</feature>
<feature type="binding site" evidence="1">
    <location>
        <position position="157"/>
    </location>
    <ligand>
        <name>UDP-N-acetyl-alpha-D-glucosamine</name>
        <dbReference type="ChEBI" id="CHEBI:57705"/>
    </ligand>
</feature>
<feature type="binding site" evidence="1">
    <location>
        <position position="188"/>
    </location>
    <ligand>
        <name>UDP-N-acetyl-alpha-D-glucosamine</name>
        <dbReference type="ChEBI" id="CHEBI:57705"/>
    </ligand>
</feature>
<feature type="binding site" evidence="1">
    <location>
        <position position="282"/>
    </location>
    <ligand>
        <name>UDP-N-acetyl-alpha-D-glucosamine</name>
        <dbReference type="ChEBI" id="CHEBI:57705"/>
    </ligand>
</feature>
<evidence type="ECO:0000255" key="1">
    <source>
        <dbReference type="HAMAP-Rule" id="MF_00033"/>
    </source>
</evidence>
<gene>
    <name evidence="1" type="primary">murG</name>
    <name type="ordered locus">aq_1177</name>
</gene>
<reference key="1">
    <citation type="journal article" date="1998" name="Nature">
        <title>The complete genome of the hyperthermophilic bacterium Aquifex aeolicus.</title>
        <authorList>
            <person name="Deckert G."/>
            <person name="Warren P.V."/>
            <person name="Gaasterland T."/>
            <person name="Young W.G."/>
            <person name="Lenox A.L."/>
            <person name="Graham D.E."/>
            <person name="Overbeek R."/>
            <person name="Snead M.A."/>
            <person name="Keller M."/>
            <person name="Aujay M."/>
            <person name="Huber R."/>
            <person name="Feldman R.A."/>
            <person name="Short J.M."/>
            <person name="Olsen G.J."/>
            <person name="Swanson R.V."/>
        </authorList>
    </citation>
    <scope>NUCLEOTIDE SEQUENCE [LARGE SCALE GENOMIC DNA]</scope>
    <source>
        <strain>VF5</strain>
    </source>
</reference>
<protein>
    <recommendedName>
        <fullName evidence="1">UDP-N-acetylglucosamine--N-acetylmuramyl-(pentapeptide) pyrophosphoryl-undecaprenol N-acetylglucosamine transferase</fullName>
        <ecNumber evidence="1">2.4.1.227</ecNumber>
    </recommendedName>
    <alternativeName>
        <fullName evidence="1">Undecaprenyl-PP-MurNAc-pentapeptide-UDPGlcNAc GlcNAc transferase</fullName>
    </alternativeName>
</protein>
<organism>
    <name type="scientific">Aquifex aeolicus (strain VF5)</name>
    <dbReference type="NCBI Taxonomy" id="224324"/>
    <lineage>
        <taxon>Bacteria</taxon>
        <taxon>Pseudomonadati</taxon>
        <taxon>Aquificota</taxon>
        <taxon>Aquificia</taxon>
        <taxon>Aquificales</taxon>
        <taxon>Aquificaceae</taxon>
        <taxon>Aquifex</taxon>
    </lineage>
</organism>
<name>MURG_AQUAE</name>
<accession>O67238</accession>
<keyword id="KW-0131">Cell cycle</keyword>
<keyword id="KW-0132">Cell division</keyword>
<keyword id="KW-0997">Cell inner membrane</keyword>
<keyword id="KW-1003">Cell membrane</keyword>
<keyword id="KW-0133">Cell shape</keyword>
<keyword id="KW-0961">Cell wall biogenesis/degradation</keyword>
<keyword id="KW-0328">Glycosyltransferase</keyword>
<keyword id="KW-0472">Membrane</keyword>
<keyword id="KW-0573">Peptidoglycan synthesis</keyword>
<keyword id="KW-1185">Reference proteome</keyword>
<keyword id="KW-0808">Transferase</keyword>
<sequence>MIAVSGGGTGGHFFPALAFTNYVLKKEKVKFIGSKRGIEYELKDLIKTEKLFLDVEPLRERNFYQKLKAIWKFLKAQEEINEFLKEDYRALIFGGYASLPLGINTVLRRKELFIHEQNSIPSKTNKILSKKAKKVLITFNYTKRFFPEGVRVGLPIRKELKKKLPKKEVKKRFGLEPDKITVLIFGGSQGALFLNELARDLKSVLPKEFQVILLTGKIHYEKFKNLEGEKFRVMPFSLDMGLIYSASDVAISRAGAGTINELSHFGVPSVFVPYPYAVDDHQFYNAKEIEKLGGGLVLRQEEAKPDKVLSALKEIVKNLERYSENIKKFFAEGAEERMYEELLG</sequence>